<protein>
    <recommendedName>
        <fullName evidence="1">Small ribosomal subunit protein uS10</fullName>
    </recommendedName>
    <alternativeName>
        <fullName evidence="2">30S ribosomal protein S10</fullName>
    </alternativeName>
</protein>
<sequence>MQNQRIRIRLKGFDHRLIDQSTAEIVETAKRTGAQVRGPIPLPTRKERYTILTSPHVNKDARDQYELRTHKRLVDIVEPTEKTVDALMRLDLAAGVDVQISLG</sequence>
<feature type="chain" id="PRO_1000127183" description="Small ribosomal subunit protein uS10">
    <location>
        <begin position="1"/>
        <end position="103"/>
    </location>
</feature>
<reference key="1">
    <citation type="submission" date="2008-02" db="EMBL/GenBank/DDBJ databases">
        <title>Complete sequence of Shewanella woodyi ATCC 51908.</title>
        <authorList>
            <consortium name="US DOE Joint Genome Institute"/>
            <person name="Copeland A."/>
            <person name="Lucas S."/>
            <person name="Lapidus A."/>
            <person name="Glavina del Rio T."/>
            <person name="Dalin E."/>
            <person name="Tice H."/>
            <person name="Bruce D."/>
            <person name="Goodwin L."/>
            <person name="Pitluck S."/>
            <person name="Sims D."/>
            <person name="Brettin T."/>
            <person name="Detter J.C."/>
            <person name="Han C."/>
            <person name="Kuske C.R."/>
            <person name="Schmutz J."/>
            <person name="Larimer F."/>
            <person name="Land M."/>
            <person name="Hauser L."/>
            <person name="Kyrpides N."/>
            <person name="Lykidis A."/>
            <person name="Zhao J.-S."/>
            <person name="Richardson P."/>
        </authorList>
    </citation>
    <scope>NUCLEOTIDE SEQUENCE [LARGE SCALE GENOMIC DNA]</scope>
    <source>
        <strain>ATCC 51908 / MS32</strain>
    </source>
</reference>
<comment type="function">
    <text evidence="1">Involved in the binding of tRNA to the ribosomes.</text>
</comment>
<comment type="subunit">
    <text evidence="1">Part of the 30S ribosomal subunit.</text>
</comment>
<comment type="similarity">
    <text evidence="1">Belongs to the universal ribosomal protein uS10 family.</text>
</comment>
<gene>
    <name evidence="1" type="primary">rpsJ</name>
    <name type="ordered locus">Swoo_4691</name>
</gene>
<name>RS10_SHEWM</name>
<dbReference type="EMBL" id="CP000961">
    <property type="protein sequence ID" value="ACA88941.1"/>
    <property type="molecule type" value="Genomic_DNA"/>
</dbReference>
<dbReference type="RefSeq" id="WP_005503530.1">
    <property type="nucleotide sequence ID" value="NC_010506.1"/>
</dbReference>
<dbReference type="SMR" id="B1KMY4"/>
<dbReference type="STRING" id="392500.Swoo_4691"/>
<dbReference type="KEGG" id="swd:Swoo_4691"/>
<dbReference type="eggNOG" id="COG0051">
    <property type="taxonomic scope" value="Bacteria"/>
</dbReference>
<dbReference type="HOGENOM" id="CLU_122625_1_3_6"/>
<dbReference type="Proteomes" id="UP000002168">
    <property type="component" value="Chromosome"/>
</dbReference>
<dbReference type="GO" id="GO:1990904">
    <property type="term" value="C:ribonucleoprotein complex"/>
    <property type="evidence" value="ECO:0007669"/>
    <property type="project" value="UniProtKB-KW"/>
</dbReference>
<dbReference type="GO" id="GO:0005840">
    <property type="term" value="C:ribosome"/>
    <property type="evidence" value="ECO:0007669"/>
    <property type="project" value="UniProtKB-KW"/>
</dbReference>
<dbReference type="GO" id="GO:0003735">
    <property type="term" value="F:structural constituent of ribosome"/>
    <property type="evidence" value="ECO:0007669"/>
    <property type="project" value="InterPro"/>
</dbReference>
<dbReference type="GO" id="GO:0000049">
    <property type="term" value="F:tRNA binding"/>
    <property type="evidence" value="ECO:0007669"/>
    <property type="project" value="UniProtKB-UniRule"/>
</dbReference>
<dbReference type="GO" id="GO:0006412">
    <property type="term" value="P:translation"/>
    <property type="evidence" value="ECO:0007669"/>
    <property type="project" value="UniProtKB-UniRule"/>
</dbReference>
<dbReference type="FunFam" id="3.30.70.600:FF:000001">
    <property type="entry name" value="30S ribosomal protein S10"/>
    <property type="match status" value="1"/>
</dbReference>
<dbReference type="Gene3D" id="3.30.70.600">
    <property type="entry name" value="Ribosomal protein S10 domain"/>
    <property type="match status" value="1"/>
</dbReference>
<dbReference type="HAMAP" id="MF_00508">
    <property type="entry name" value="Ribosomal_uS10"/>
    <property type="match status" value="1"/>
</dbReference>
<dbReference type="InterPro" id="IPR001848">
    <property type="entry name" value="Ribosomal_uS10"/>
</dbReference>
<dbReference type="InterPro" id="IPR018268">
    <property type="entry name" value="Ribosomal_uS10_CS"/>
</dbReference>
<dbReference type="InterPro" id="IPR027486">
    <property type="entry name" value="Ribosomal_uS10_dom"/>
</dbReference>
<dbReference type="InterPro" id="IPR036838">
    <property type="entry name" value="Ribosomal_uS10_dom_sf"/>
</dbReference>
<dbReference type="NCBIfam" id="NF001861">
    <property type="entry name" value="PRK00596.1"/>
    <property type="match status" value="1"/>
</dbReference>
<dbReference type="NCBIfam" id="TIGR01049">
    <property type="entry name" value="rpsJ_bact"/>
    <property type="match status" value="1"/>
</dbReference>
<dbReference type="PANTHER" id="PTHR11700">
    <property type="entry name" value="30S RIBOSOMAL PROTEIN S10 FAMILY MEMBER"/>
    <property type="match status" value="1"/>
</dbReference>
<dbReference type="Pfam" id="PF00338">
    <property type="entry name" value="Ribosomal_S10"/>
    <property type="match status" value="1"/>
</dbReference>
<dbReference type="PRINTS" id="PR00971">
    <property type="entry name" value="RIBOSOMALS10"/>
</dbReference>
<dbReference type="SMART" id="SM01403">
    <property type="entry name" value="Ribosomal_S10"/>
    <property type="match status" value="1"/>
</dbReference>
<dbReference type="SUPFAM" id="SSF54999">
    <property type="entry name" value="Ribosomal protein S10"/>
    <property type="match status" value="1"/>
</dbReference>
<dbReference type="PROSITE" id="PS00361">
    <property type="entry name" value="RIBOSOMAL_S10"/>
    <property type="match status" value="1"/>
</dbReference>
<accession>B1KMY4</accession>
<keyword id="KW-1185">Reference proteome</keyword>
<keyword id="KW-0687">Ribonucleoprotein</keyword>
<keyword id="KW-0689">Ribosomal protein</keyword>
<proteinExistence type="inferred from homology"/>
<evidence type="ECO:0000255" key="1">
    <source>
        <dbReference type="HAMAP-Rule" id="MF_00508"/>
    </source>
</evidence>
<evidence type="ECO:0000305" key="2"/>
<organism>
    <name type="scientific">Shewanella woodyi (strain ATCC 51908 / MS32)</name>
    <dbReference type="NCBI Taxonomy" id="392500"/>
    <lineage>
        <taxon>Bacteria</taxon>
        <taxon>Pseudomonadati</taxon>
        <taxon>Pseudomonadota</taxon>
        <taxon>Gammaproteobacteria</taxon>
        <taxon>Alteromonadales</taxon>
        <taxon>Shewanellaceae</taxon>
        <taxon>Shewanella</taxon>
    </lineage>
</organism>